<protein>
    <recommendedName>
        <fullName evidence="1">Succinate--CoA ligase [ADP-forming] subunit beta</fullName>
        <ecNumber evidence="1">6.2.1.5</ecNumber>
    </recommendedName>
    <alternativeName>
        <fullName evidence="1">Succinyl-CoA synthetase subunit beta</fullName>
        <shortName evidence="1">SCS-beta</shortName>
    </alternativeName>
</protein>
<feature type="chain" id="PRO_1000082095" description="Succinate--CoA ligase [ADP-forming] subunit beta">
    <location>
        <begin position="1"/>
        <end position="385"/>
    </location>
</feature>
<feature type="domain" description="ATP-grasp" evidence="1">
    <location>
        <begin position="9"/>
        <end position="243"/>
    </location>
</feature>
<feature type="binding site" evidence="1">
    <location>
        <position position="45"/>
    </location>
    <ligand>
        <name>ATP</name>
        <dbReference type="ChEBI" id="CHEBI:30616"/>
    </ligand>
</feature>
<feature type="binding site" evidence="1">
    <location>
        <begin position="52"/>
        <end position="54"/>
    </location>
    <ligand>
        <name>ATP</name>
        <dbReference type="ChEBI" id="CHEBI:30616"/>
    </ligand>
</feature>
<feature type="binding site" evidence="1">
    <location>
        <position position="98"/>
    </location>
    <ligand>
        <name>ATP</name>
        <dbReference type="ChEBI" id="CHEBI:30616"/>
    </ligand>
</feature>
<feature type="binding site" evidence="1">
    <location>
        <position position="101"/>
    </location>
    <ligand>
        <name>ATP</name>
        <dbReference type="ChEBI" id="CHEBI:30616"/>
    </ligand>
</feature>
<feature type="binding site" evidence="1">
    <location>
        <position position="106"/>
    </location>
    <ligand>
        <name>ATP</name>
        <dbReference type="ChEBI" id="CHEBI:30616"/>
    </ligand>
</feature>
<feature type="binding site" evidence="1">
    <location>
        <position position="198"/>
    </location>
    <ligand>
        <name>Mg(2+)</name>
        <dbReference type="ChEBI" id="CHEBI:18420"/>
    </ligand>
</feature>
<feature type="binding site" evidence="1">
    <location>
        <position position="212"/>
    </location>
    <ligand>
        <name>Mg(2+)</name>
        <dbReference type="ChEBI" id="CHEBI:18420"/>
    </ligand>
</feature>
<feature type="binding site" evidence="1">
    <location>
        <position position="263"/>
    </location>
    <ligand>
        <name>substrate</name>
        <note>ligand shared with subunit alpha</note>
    </ligand>
</feature>
<feature type="binding site" evidence="1">
    <location>
        <begin position="320"/>
        <end position="322"/>
    </location>
    <ligand>
        <name>substrate</name>
        <note>ligand shared with subunit alpha</note>
    </ligand>
</feature>
<evidence type="ECO:0000255" key="1">
    <source>
        <dbReference type="HAMAP-Rule" id="MF_00558"/>
    </source>
</evidence>
<sequence>MNIHEYQAKEILSAYGIPVPRGRVALTSDQVERAAKEMGGRCVIKAQIYAGGRGKAGGVKLVHHPEQAQDYGKELFGRRLITPQTGPEGLKVRRILVEEAVEIAREFYLSITLDRSTSRYCLIASAEGGVDIEEVVQKSPDKIHVLTIDPYTGLRPFQARRIALALGLSGTLCEDCVELMLNLYKVVLEKDCSLVEINPLVVTRAGWLMAMDAKINFDDNAIFRHREYPDMMDYSQLDTLEINAGKYDLSYIKLSGNIGCMVNGAGLAMATLDVLKEFGGEPANFLDVGGGATREKVAEAFKIILEDADVKGVFVNIFGGIMRCDVIAQGIIEAASEVHCTLPIVVRMDGSKVAEGKQLLVESGLNVQTADSLGEGAERIVGMLG</sequence>
<dbReference type="EC" id="6.2.1.5" evidence="1"/>
<dbReference type="EMBL" id="AE017180">
    <property type="protein sequence ID" value="AAR34384.1"/>
    <property type="molecule type" value="Genomic_DNA"/>
</dbReference>
<dbReference type="RefSeq" id="NP_952111.1">
    <property type="nucleotide sequence ID" value="NC_002939.5"/>
</dbReference>
<dbReference type="RefSeq" id="WP_010941719.1">
    <property type="nucleotide sequence ID" value="NC_002939.5"/>
</dbReference>
<dbReference type="SMR" id="Q74EA5"/>
<dbReference type="FunCoup" id="Q74EA5">
    <property type="interactions" value="531"/>
</dbReference>
<dbReference type="STRING" id="243231.GSU1058"/>
<dbReference type="EnsemblBacteria" id="AAR34384">
    <property type="protein sequence ID" value="AAR34384"/>
    <property type="gene ID" value="GSU1058"/>
</dbReference>
<dbReference type="KEGG" id="gsu:GSU1058"/>
<dbReference type="PATRIC" id="fig|243231.5.peg.1056"/>
<dbReference type="eggNOG" id="COG0045">
    <property type="taxonomic scope" value="Bacteria"/>
</dbReference>
<dbReference type="HOGENOM" id="CLU_037430_0_2_7"/>
<dbReference type="InParanoid" id="Q74EA5"/>
<dbReference type="OrthoDB" id="9802602at2"/>
<dbReference type="UniPathway" id="UPA00223">
    <property type="reaction ID" value="UER00999"/>
</dbReference>
<dbReference type="Proteomes" id="UP000000577">
    <property type="component" value="Chromosome"/>
</dbReference>
<dbReference type="GO" id="GO:0005829">
    <property type="term" value="C:cytosol"/>
    <property type="evidence" value="ECO:0000318"/>
    <property type="project" value="GO_Central"/>
</dbReference>
<dbReference type="GO" id="GO:0042709">
    <property type="term" value="C:succinate-CoA ligase complex"/>
    <property type="evidence" value="ECO:0000318"/>
    <property type="project" value="GO_Central"/>
</dbReference>
<dbReference type="GO" id="GO:0005524">
    <property type="term" value="F:ATP binding"/>
    <property type="evidence" value="ECO:0007669"/>
    <property type="project" value="UniProtKB-UniRule"/>
</dbReference>
<dbReference type="GO" id="GO:0000287">
    <property type="term" value="F:magnesium ion binding"/>
    <property type="evidence" value="ECO:0007669"/>
    <property type="project" value="UniProtKB-UniRule"/>
</dbReference>
<dbReference type="GO" id="GO:0004775">
    <property type="term" value="F:succinate-CoA ligase (ADP-forming) activity"/>
    <property type="evidence" value="ECO:0000318"/>
    <property type="project" value="GO_Central"/>
</dbReference>
<dbReference type="GO" id="GO:0004776">
    <property type="term" value="F:succinate-CoA ligase (GDP-forming) activity"/>
    <property type="evidence" value="ECO:0007669"/>
    <property type="project" value="RHEA"/>
</dbReference>
<dbReference type="GO" id="GO:0006104">
    <property type="term" value="P:succinyl-CoA metabolic process"/>
    <property type="evidence" value="ECO:0000318"/>
    <property type="project" value="GO_Central"/>
</dbReference>
<dbReference type="GO" id="GO:0006099">
    <property type="term" value="P:tricarboxylic acid cycle"/>
    <property type="evidence" value="ECO:0000318"/>
    <property type="project" value="GO_Central"/>
</dbReference>
<dbReference type="FunFam" id="3.30.1490.20:FF:000002">
    <property type="entry name" value="Succinate--CoA ligase [ADP-forming] subunit beta"/>
    <property type="match status" value="1"/>
</dbReference>
<dbReference type="FunFam" id="3.30.470.20:FF:000002">
    <property type="entry name" value="Succinate--CoA ligase [ADP-forming] subunit beta"/>
    <property type="match status" value="1"/>
</dbReference>
<dbReference type="FunFam" id="3.40.50.261:FF:000001">
    <property type="entry name" value="Succinate--CoA ligase [ADP-forming] subunit beta"/>
    <property type="match status" value="1"/>
</dbReference>
<dbReference type="Gene3D" id="3.30.1490.20">
    <property type="entry name" value="ATP-grasp fold, A domain"/>
    <property type="match status" value="1"/>
</dbReference>
<dbReference type="Gene3D" id="3.30.470.20">
    <property type="entry name" value="ATP-grasp fold, B domain"/>
    <property type="match status" value="1"/>
</dbReference>
<dbReference type="Gene3D" id="3.40.50.261">
    <property type="entry name" value="Succinyl-CoA synthetase domains"/>
    <property type="match status" value="1"/>
</dbReference>
<dbReference type="HAMAP" id="MF_00558">
    <property type="entry name" value="Succ_CoA_beta"/>
    <property type="match status" value="1"/>
</dbReference>
<dbReference type="InterPro" id="IPR011761">
    <property type="entry name" value="ATP-grasp"/>
</dbReference>
<dbReference type="InterPro" id="IPR013650">
    <property type="entry name" value="ATP-grasp_succ-CoA_synth-type"/>
</dbReference>
<dbReference type="InterPro" id="IPR013815">
    <property type="entry name" value="ATP_grasp_subdomain_1"/>
</dbReference>
<dbReference type="InterPro" id="IPR017866">
    <property type="entry name" value="Succ-CoA_synthase_bsu_CS"/>
</dbReference>
<dbReference type="InterPro" id="IPR005811">
    <property type="entry name" value="SUCC_ACL_C"/>
</dbReference>
<dbReference type="InterPro" id="IPR005809">
    <property type="entry name" value="Succ_CoA_ligase-like_bsu"/>
</dbReference>
<dbReference type="InterPro" id="IPR016102">
    <property type="entry name" value="Succinyl-CoA_synth-like"/>
</dbReference>
<dbReference type="NCBIfam" id="NF001913">
    <property type="entry name" value="PRK00696.1"/>
    <property type="match status" value="1"/>
</dbReference>
<dbReference type="NCBIfam" id="TIGR01016">
    <property type="entry name" value="sucCoAbeta"/>
    <property type="match status" value="1"/>
</dbReference>
<dbReference type="PANTHER" id="PTHR11815:SF10">
    <property type="entry name" value="SUCCINATE--COA LIGASE [GDP-FORMING] SUBUNIT BETA, MITOCHONDRIAL"/>
    <property type="match status" value="1"/>
</dbReference>
<dbReference type="PANTHER" id="PTHR11815">
    <property type="entry name" value="SUCCINYL-COA SYNTHETASE BETA CHAIN"/>
    <property type="match status" value="1"/>
</dbReference>
<dbReference type="Pfam" id="PF08442">
    <property type="entry name" value="ATP-grasp_2"/>
    <property type="match status" value="1"/>
</dbReference>
<dbReference type="Pfam" id="PF00549">
    <property type="entry name" value="Ligase_CoA"/>
    <property type="match status" value="1"/>
</dbReference>
<dbReference type="PIRSF" id="PIRSF001554">
    <property type="entry name" value="SucCS_beta"/>
    <property type="match status" value="1"/>
</dbReference>
<dbReference type="SUPFAM" id="SSF56059">
    <property type="entry name" value="Glutathione synthetase ATP-binding domain-like"/>
    <property type="match status" value="1"/>
</dbReference>
<dbReference type="SUPFAM" id="SSF52210">
    <property type="entry name" value="Succinyl-CoA synthetase domains"/>
    <property type="match status" value="1"/>
</dbReference>
<dbReference type="PROSITE" id="PS50975">
    <property type="entry name" value="ATP_GRASP"/>
    <property type="match status" value="1"/>
</dbReference>
<dbReference type="PROSITE" id="PS01217">
    <property type="entry name" value="SUCCINYL_COA_LIG_3"/>
    <property type="match status" value="1"/>
</dbReference>
<comment type="function">
    <text evidence="1">Succinyl-CoA synthetase functions in the citric acid cycle (TCA), coupling the hydrolysis of succinyl-CoA to the synthesis of either ATP or GTP and thus represents the only step of substrate-level phosphorylation in the TCA. The beta subunit provides nucleotide specificity of the enzyme and binds the substrate succinate, while the binding sites for coenzyme A and phosphate are found in the alpha subunit.</text>
</comment>
<comment type="catalytic activity">
    <reaction evidence="1">
        <text>succinate + ATP + CoA = succinyl-CoA + ADP + phosphate</text>
        <dbReference type="Rhea" id="RHEA:17661"/>
        <dbReference type="ChEBI" id="CHEBI:30031"/>
        <dbReference type="ChEBI" id="CHEBI:30616"/>
        <dbReference type="ChEBI" id="CHEBI:43474"/>
        <dbReference type="ChEBI" id="CHEBI:57287"/>
        <dbReference type="ChEBI" id="CHEBI:57292"/>
        <dbReference type="ChEBI" id="CHEBI:456216"/>
        <dbReference type="EC" id="6.2.1.5"/>
    </reaction>
    <physiologicalReaction direction="right-to-left" evidence="1">
        <dbReference type="Rhea" id="RHEA:17663"/>
    </physiologicalReaction>
</comment>
<comment type="catalytic activity">
    <reaction evidence="1">
        <text>GTP + succinate + CoA = succinyl-CoA + GDP + phosphate</text>
        <dbReference type="Rhea" id="RHEA:22120"/>
        <dbReference type="ChEBI" id="CHEBI:30031"/>
        <dbReference type="ChEBI" id="CHEBI:37565"/>
        <dbReference type="ChEBI" id="CHEBI:43474"/>
        <dbReference type="ChEBI" id="CHEBI:57287"/>
        <dbReference type="ChEBI" id="CHEBI:57292"/>
        <dbReference type="ChEBI" id="CHEBI:58189"/>
    </reaction>
    <physiologicalReaction direction="right-to-left" evidence="1">
        <dbReference type="Rhea" id="RHEA:22122"/>
    </physiologicalReaction>
</comment>
<comment type="cofactor">
    <cofactor evidence="1">
        <name>Mg(2+)</name>
        <dbReference type="ChEBI" id="CHEBI:18420"/>
    </cofactor>
    <text evidence="1">Binds 1 Mg(2+) ion per subunit.</text>
</comment>
<comment type="pathway">
    <text evidence="1">Carbohydrate metabolism; tricarboxylic acid cycle; succinate from succinyl-CoA (ligase route): step 1/1.</text>
</comment>
<comment type="subunit">
    <text evidence="1">Heterotetramer of two alpha and two beta subunits.</text>
</comment>
<comment type="similarity">
    <text evidence="1">Belongs to the succinate/malate CoA ligase beta subunit family.</text>
</comment>
<proteinExistence type="inferred from homology"/>
<organism>
    <name type="scientific">Geobacter sulfurreducens (strain ATCC 51573 / DSM 12127 / PCA)</name>
    <dbReference type="NCBI Taxonomy" id="243231"/>
    <lineage>
        <taxon>Bacteria</taxon>
        <taxon>Pseudomonadati</taxon>
        <taxon>Thermodesulfobacteriota</taxon>
        <taxon>Desulfuromonadia</taxon>
        <taxon>Geobacterales</taxon>
        <taxon>Geobacteraceae</taxon>
        <taxon>Geobacter</taxon>
    </lineage>
</organism>
<keyword id="KW-0067">ATP-binding</keyword>
<keyword id="KW-0436">Ligase</keyword>
<keyword id="KW-0460">Magnesium</keyword>
<keyword id="KW-0479">Metal-binding</keyword>
<keyword id="KW-0547">Nucleotide-binding</keyword>
<keyword id="KW-1185">Reference proteome</keyword>
<keyword id="KW-0816">Tricarboxylic acid cycle</keyword>
<reference key="1">
    <citation type="journal article" date="2003" name="Science">
        <title>Genome of Geobacter sulfurreducens: metal reduction in subsurface environments.</title>
        <authorList>
            <person name="Methe B.A."/>
            <person name="Nelson K.E."/>
            <person name="Eisen J.A."/>
            <person name="Paulsen I.T."/>
            <person name="Nelson W.C."/>
            <person name="Heidelberg J.F."/>
            <person name="Wu D."/>
            <person name="Wu M."/>
            <person name="Ward N.L."/>
            <person name="Beanan M.J."/>
            <person name="Dodson R.J."/>
            <person name="Madupu R."/>
            <person name="Brinkac L.M."/>
            <person name="Daugherty S.C."/>
            <person name="DeBoy R.T."/>
            <person name="Durkin A.S."/>
            <person name="Gwinn M.L."/>
            <person name="Kolonay J.F."/>
            <person name="Sullivan S.A."/>
            <person name="Haft D.H."/>
            <person name="Selengut J."/>
            <person name="Davidsen T.M."/>
            <person name="Zafar N."/>
            <person name="White O."/>
            <person name="Tran B."/>
            <person name="Romero C."/>
            <person name="Forberger H.A."/>
            <person name="Weidman J.F."/>
            <person name="Khouri H.M."/>
            <person name="Feldblyum T.V."/>
            <person name="Utterback T.R."/>
            <person name="Van Aken S.E."/>
            <person name="Lovley D.R."/>
            <person name="Fraser C.M."/>
        </authorList>
    </citation>
    <scope>NUCLEOTIDE SEQUENCE [LARGE SCALE GENOMIC DNA]</scope>
    <source>
        <strain>ATCC 51573 / DSM 12127 / PCA</strain>
    </source>
</reference>
<accession>Q74EA5</accession>
<gene>
    <name evidence="1" type="primary">sucC</name>
    <name type="ordered locus">GSU1058</name>
</gene>
<name>SUCC_GEOSL</name>